<organism>
    <name type="scientific">Thermotoga sp. (strain RQ2)</name>
    <dbReference type="NCBI Taxonomy" id="126740"/>
    <lineage>
        <taxon>Bacteria</taxon>
        <taxon>Thermotogati</taxon>
        <taxon>Thermotogota</taxon>
        <taxon>Thermotogae</taxon>
        <taxon>Thermotogales</taxon>
        <taxon>Thermotogaceae</taxon>
        <taxon>Thermotoga</taxon>
    </lineage>
</organism>
<evidence type="ECO:0000255" key="1">
    <source>
        <dbReference type="HAMAP-Rule" id="MF_00267"/>
    </source>
</evidence>
<accession>B1L862</accession>
<feature type="chain" id="PRO_1000114298" description="Probable septum site-determining protein MinC">
    <location>
        <begin position="1"/>
        <end position="210"/>
    </location>
</feature>
<reference key="1">
    <citation type="journal article" date="2011" name="J. Bacteriol.">
        <title>Genome sequence of Thermotoga sp. strain RQ2, a hyperthermophilic bacterium isolated from a geothermally heated region of the seafloor near Ribeira Quente, the Azores.</title>
        <authorList>
            <person name="Swithers K.S."/>
            <person name="DiPippo J.L."/>
            <person name="Bruce D.C."/>
            <person name="Detter C."/>
            <person name="Tapia R."/>
            <person name="Han S."/>
            <person name="Saunders E."/>
            <person name="Goodwin L.A."/>
            <person name="Han J."/>
            <person name="Woyke T."/>
            <person name="Pitluck S."/>
            <person name="Pennacchio L."/>
            <person name="Nolan M."/>
            <person name="Mikhailova N."/>
            <person name="Lykidis A."/>
            <person name="Land M.L."/>
            <person name="Brettin T."/>
            <person name="Stetter K.O."/>
            <person name="Nelson K.E."/>
            <person name="Gogarten J.P."/>
            <person name="Noll K.M."/>
        </authorList>
    </citation>
    <scope>NUCLEOTIDE SEQUENCE [LARGE SCALE GENOMIC DNA]</scope>
    <source>
        <strain>RQ2</strain>
    </source>
</reference>
<dbReference type="EMBL" id="CP000969">
    <property type="protein sequence ID" value="ACB10092.1"/>
    <property type="molecule type" value="Genomic_DNA"/>
</dbReference>
<dbReference type="RefSeq" id="WP_012311327.1">
    <property type="nucleotide sequence ID" value="NC_010483.1"/>
</dbReference>
<dbReference type="SMR" id="B1L862"/>
<dbReference type="KEGG" id="trq:TRQ2_1761"/>
<dbReference type="HOGENOM" id="CLU_048711_2_1_0"/>
<dbReference type="Proteomes" id="UP000001687">
    <property type="component" value="Chromosome"/>
</dbReference>
<dbReference type="GO" id="GO:0000902">
    <property type="term" value="P:cell morphogenesis"/>
    <property type="evidence" value="ECO:0007669"/>
    <property type="project" value="InterPro"/>
</dbReference>
<dbReference type="GO" id="GO:0000917">
    <property type="term" value="P:division septum assembly"/>
    <property type="evidence" value="ECO:0007669"/>
    <property type="project" value="UniProtKB-KW"/>
</dbReference>
<dbReference type="GO" id="GO:0051302">
    <property type="term" value="P:regulation of cell division"/>
    <property type="evidence" value="ECO:0007669"/>
    <property type="project" value="InterPro"/>
</dbReference>
<dbReference type="GO" id="GO:1901891">
    <property type="term" value="P:regulation of cell septum assembly"/>
    <property type="evidence" value="ECO:0007669"/>
    <property type="project" value="InterPro"/>
</dbReference>
<dbReference type="Gene3D" id="2.160.20.70">
    <property type="match status" value="1"/>
</dbReference>
<dbReference type="Gene3D" id="3.30.750.50">
    <property type="entry name" value="Cell-division inhibitor MinC, N-terminal domain"/>
    <property type="match status" value="1"/>
</dbReference>
<dbReference type="HAMAP" id="MF_00267">
    <property type="entry name" value="MinC"/>
    <property type="match status" value="1"/>
</dbReference>
<dbReference type="InterPro" id="IPR016098">
    <property type="entry name" value="CAP/MinC_C"/>
</dbReference>
<dbReference type="InterPro" id="IPR013033">
    <property type="entry name" value="MinC"/>
</dbReference>
<dbReference type="InterPro" id="IPR036145">
    <property type="entry name" value="MinC_C_sf"/>
</dbReference>
<dbReference type="InterPro" id="IPR007874">
    <property type="entry name" value="MinC_N"/>
</dbReference>
<dbReference type="InterPro" id="IPR005526">
    <property type="entry name" value="Septum_form_inhib_MinC_C"/>
</dbReference>
<dbReference type="NCBIfam" id="TIGR01222">
    <property type="entry name" value="minC"/>
    <property type="match status" value="1"/>
</dbReference>
<dbReference type="NCBIfam" id="NF010598">
    <property type="entry name" value="PRK13992.1"/>
    <property type="match status" value="1"/>
</dbReference>
<dbReference type="PANTHER" id="PTHR34108">
    <property type="entry name" value="SEPTUM SITE-DETERMINING PROTEIN MINC"/>
    <property type="match status" value="1"/>
</dbReference>
<dbReference type="PANTHER" id="PTHR34108:SF1">
    <property type="entry name" value="SEPTUM SITE-DETERMINING PROTEIN MINC"/>
    <property type="match status" value="1"/>
</dbReference>
<dbReference type="Pfam" id="PF03775">
    <property type="entry name" value="MinC_C"/>
    <property type="match status" value="1"/>
</dbReference>
<dbReference type="Pfam" id="PF05209">
    <property type="entry name" value="MinC_N"/>
    <property type="match status" value="1"/>
</dbReference>
<dbReference type="SUPFAM" id="SSF63848">
    <property type="entry name" value="Cell-division inhibitor MinC, C-terminal domain"/>
    <property type="match status" value="1"/>
</dbReference>
<dbReference type="SUPFAM" id="SSF64043">
    <property type="entry name" value="Cell-division inhibitor MinC, N-terminal domain"/>
    <property type="match status" value="1"/>
</dbReference>
<comment type="function">
    <text evidence="1">Cell division inhibitor that blocks the formation of polar Z ring septums. Rapidly oscillates between the poles of the cell to destabilize FtsZ filaments that have formed before they mature into polar Z rings. Prevents FtsZ polymerization.</text>
</comment>
<comment type="subunit">
    <text evidence="1">Interacts with MinD and FtsZ.</text>
</comment>
<comment type="similarity">
    <text evidence="1">Belongs to the MinC family.</text>
</comment>
<proteinExistence type="inferred from homology"/>
<protein>
    <recommendedName>
        <fullName evidence="1">Probable septum site-determining protein MinC</fullName>
    </recommendedName>
</protein>
<name>MINC_THESQ</name>
<gene>
    <name evidence="1" type="primary">minC</name>
    <name type="ordered locus">TRQ2_1761</name>
</gene>
<sequence>MVDFKMTKEGLILLIKDYQNLEEVLNAISARITQMGGFFAKGDRISLMIENHNKHSQDIPKIVSHLRNLGLEVSQILVGSTVEGKENDLRVQSRTTVESTGKVIKRNIRSGQTVVHSGDVIVFGNVNKGAEILAGGSVVVFGKAQGNIRAGLNEGEQAVVAALDLQTSLIQIAGFITHSKGEENVPSIAHVKGNRIVIEPFDKVSFERSE</sequence>
<keyword id="KW-0131">Cell cycle</keyword>
<keyword id="KW-0132">Cell division</keyword>
<keyword id="KW-0717">Septation</keyword>